<evidence type="ECO:0000250" key="1"/>
<evidence type="ECO:0000250" key="2">
    <source>
        <dbReference type="UniProtKB" id="P39748"/>
    </source>
</evidence>
<evidence type="ECO:0000250" key="3">
    <source>
        <dbReference type="UniProtKB" id="Q17RS7"/>
    </source>
</evidence>
<evidence type="ECO:0000250" key="4">
    <source>
        <dbReference type="UniProtKB" id="Q58839"/>
    </source>
</evidence>
<evidence type="ECO:0000250" key="5">
    <source>
        <dbReference type="UniProtKB" id="Q9LPD2"/>
    </source>
</evidence>
<evidence type="ECO:0000250" key="6">
    <source>
        <dbReference type="UniProtKB" id="Q9UQ84"/>
    </source>
</evidence>
<evidence type="ECO:0000256" key="7">
    <source>
        <dbReference type="SAM" id="MobiDB-lite"/>
    </source>
</evidence>
<evidence type="ECO:0000269" key="8">
    <source>
    </source>
</evidence>
<evidence type="ECO:0000269" key="9">
    <source>
    </source>
</evidence>
<evidence type="ECO:0000303" key="10">
    <source>
    </source>
</evidence>
<evidence type="ECO:0000305" key="11"/>
<evidence type="ECO:0000312" key="12">
    <source>
        <dbReference type="EMBL" id="BAD46702.1"/>
    </source>
</evidence>
<evidence type="ECO:0000312" key="13">
    <source>
        <dbReference type="EMBL" id="EAZ33172.1"/>
    </source>
</evidence>
<evidence type="ECO:0000312" key="14">
    <source>
        <dbReference type="EMBL" id="EEE62627.1"/>
    </source>
</evidence>
<organism>
    <name type="scientific">Oryza sativa subsp. japonica</name>
    <name type="common">Rice</name>
    <dbReference type="NCBI Taxonomy" id="39947"/>
    <lineage>
        <taxon>Eukaryota</taxon>
        <taxon>Viridiplantae</taxon>
        <taxon>Streptophyta</taxon>
        <taxon>Embryophyta</taxon>
        <taxon>Tracheophyta</taxon>
        <taxon>Spermatophyta</taxon>
        <taxon>Magnoliopsida</taxon>
        <taxon>Liliopsida</taxon>
        <taxon>Poales</taxon>
        <taxon>Poaceae</taxon>
        <taxon>BOP clade</taxon>
        <taxon>Oryzoideae</taxon>
        <taxon>Oryzeae</taxon>
        <taxon>Oryzinae</taxon>
        <taxon>Oryza</taxon>
        <taxon>Oryza sativa</taxon>
    </lineage>
</organism>
<accession>Q64MA3</accession>
<accession>B7E8Q8</accession>
<protein>
    <recommendedName>
        <fullName evidence="10">Flap endonuclease GEN-like 1</fullName>
        <shortName evidence="10">OsGEN-L</shortName>
        <shortName evidence="10">Protein OsGEN-like</shortName>
        <ecNumber>3.1.-.-</ecNumber>
    </recommendedName>
    <alternativeName>
        <fullName evidence="10">OsRAD</fullName>
    </alternativeName>
</protein>
<feature type="chain" id="PRO_0000315623" description="Flap endonuclease GEN-like 1">
    <location>
        <begin position="1"/>
        <end position="629"/>
    </location>
</feature>
<feature type="region of interest" description="N-domain">
    <location>
        <begin position="1"/>
        <end position="87"/>
    </location>
</feature>
<feature type="region of interest" description="XPG-N domain" evidence="3">
    <location>
        <begin position="2"/>
        <end position="98"/>
    </location>
</feature>
<feature type="region of interest" description="I-domain" evidence="5">
    <location>
        <begin position="136"/>
        <end position="225"/>
    </location>
</feature>
<feature type="region of interest" description="XPG-I domain" evidence="3">
    <location>
        <begin position="136"/>
        <end position="221"/>
    </location>
</feature>
<feature type="region of interest" description="5'-3' exonuclease domain" evidence="3">
    <location>
        <begin position="221"/>
        <end position="421"/>
    </location>
</feature>
<feature type="region of interest" description="Disordered" evidence="7">
    <location>
        <begin position="594"/>
        <end position="617"/>
    </location>
</feature>
<feature type="compositionally biased region" description="Basic and acidic residues" evidence="7">
    <location>
        <begin position="601"/>
        <end position="614"/>
    </location>
</feature>
<feature type="binding site" evidence="2">
    <location>
        <position position="31"/>
    </location>
    <ligand>
        <name>Mg(2+)</name>
        <dbReference type="ChEBI" id="CHEBI:18420"/>
        <label>1</label>
    </ligand>
</feature>
<feature type="binding site" evidence="3">
    <location>
        <position position="78"/>
    </location>
    <ligand>
        <name>Mg(2+)</name>
        <dbReference type="ChEBI" id="CHEBI:18420"/>
        <label>1</label>
    </ligand>
</feature>
<feature type="binding site" evidence="4">
    <location>
        <position position="148"/>
    </location>
    <ligand>
        <name>Mg(2+)</name>
        <dbReference type="ChEBI" id="CHEBI:18420"/>
        <label>1</label>
    </ligand>
</feature>
<feature type="binding site" evidence="4">
    <location>
        <position position="150"/>
    </location>
    <ligand>
        <name>Mg(2+)</name>
        <dbReference type="ChEBI" id="CHEBI:18420"/>
        <label>1</label>
    </ligand>
</feature>
<feature type="binding site" evidence="6">
    <location>
        <position position="169"/>
    </location>
    <ligand>
        <name>Mg(2+)</name>
        <dbReference type="ChEBI" id="CHEBI:18420"/>
        <label>2</label>
    </ligand>
</feature>
<feature type="binding site" evidence="6">
    <location>
        <position position="171"/>
    </location>
    <ligand>
        <name>Mg(2+)</name>
        <dbReference type="ChEBI" id="CHEBI:18420"/>
        <label>2</label>
    </ligand>
</feature>
<feature type="binding site" evidence="4">
    <location>
        <position position="221"/>
    </location>
    <ligand>
        <name>Mg(2+)</name>
        <dbReference type="ChEBI" id="CHEBI:18420"/>
        <label>2</label>
    </ligand>
</feature>
<comment type="function">
    <text evidence="8 9">Endonuclease which cleaves flap structures at the junction between single-stranded DNA and double-stranded DNA. Possesses both single-stranded and double-stranded DNA-binding activities. Involved in early microspore development, but does not alter meiosis or tapetal cells development (PubMed:15792960, PubMed:22247560). Possesses Holliday junction (HJ) resolvase activity in vitro. Cleaves HJ at symmetrically related sites of the branch point (PubMed:22247560).</text>
</comment>
<comment type="cofactor">
    <cofactor evidence="1">
        <name>Mg(2+)</name>
        <dbReference type="ChEBI" id="CHEBI:18420"/>
    </cofactor>
    <text evidence="1">Binds 2 magnesium ions per subunit. They probably participate in the reaction catalyzed by the enzyme. May bind an additional third magnesium ion after substrate binding.</text>
</comment>
<comment type="subunit">
    <text evidence="9">Monomer. Interacts with PCNA. PCNA stimulates the nuclease activity without altering cleavage specificity.</text>
</comment>
<comment type="subcellular location">
    <subcellularLocation>
        <location evidence="8">Nucleus</location>
    </subcellularLocation>
</comment>
<comment type="tissue specificity">
    <text evidence="8">Highly expressed in anthers. Expressed in roots and leaves.</text>
</comment>
<comment type="disruption phenotype">
    <text evidence="8">Plants develop abnormal anthers with degraded microspores, causing male sterility.</text>
</comment>
<comment type="similarity">
    <text evidence="11">Belongs to the XPG/RAD2 endonuclease family. GEN subfamily.</text>
</comment>
<proteinExistence type="evidence at protein level"/>
<keyword id="KW-0227">DNA damage</keyword>
<keyword id="KW-0234">DNA repair</keyword>
<keyword id="KW-0255">Endonuclease</keyword>
<keyword id="KW-0378">Hydrolase</keyword>
<keyword id="KW-0460">Magnesium</keyword>
<keyword id="KW-0479">Metal-binding</keyword>
<keyword id="KW-0540">Nuclease</keyword>
<keyword id="KW-0539">Nucleus</keyword>
<keyword id="KW-1185">Reference proteome</keyword>
<name>GENL1_ORYSJ</name>
<gene>
    <name evidence="10" type="primary">RAD</name>
    <name evidence="10" type="synonym">GEN1</name>
    <name evidence="11" type="ordered locus">Os09g0521900</name>
    <name evidence="11" type="ordered locus">LOC_Os09g35000</name>
    <name evidence="13" type="ORF">OsJ_016655</name>
    <name evidence="14" type="ORF">OsJ_17430</name>
    <name evidence="12" type="ORF">OSJNOa273B05.7</name>
</gene>
<reference key="1">
    <citation type="journal article" date="2005" name="Plant Cell Physiol.">
        <title>RNAi-mediated silencing of OsGEN-L (OsGEN-like), a new member of the RAD2/XPG nuclease family, causes male sterility by defect of microspore development in rice.</title>
        <authorList>
            <person name="Moritoh S."/>
            <person name="Miki D."/>
            <person name="Akiyama M."/>
            <person name="Kawahara M."/>
            <person name="Izawa T."/>
            <person name="Maki H."/>
            <person name="Shimamoto K."/>
        </authorList>
    </citation>
    <scope>NUCLEOTIDE SEQUENCE [GENOMIC DNA / MRNA]</scope>
    <scope>FUNCTION</scope>
    <scope>SUBCELLULAR LOCATION</scope>
    <scope>TISSUE SPECIFICITY</scope>
    <scope>DISRUPTION PHENOTYPE</scope>
    <source>
        <strain>cv. Toride</strain>
        <tissue>Root</tissue>
    </source>
</reference>
<reference key="2">
    <citation type="journal article" date="2005" name="Nature">
        <title>The map-based sequence of the rice genome.</title>
        <authorList>
            <consortium name="International rice genome sequencing project (IRGSP)"/>
        </authorList>
    </citation>
    <scope>NUCLEOTIDE SEQUENCE [LARGE SCALE GENOMIC DNA]</scope>
    <source>
        <strain>cv. Nipponbare</strain>
    </source>
</reference>
<reference key="3">
    <citation type="journal article" date="2013" name="Rice">
        <title>Improvement of the Oryza sativa Nipponbare reference genome using next generation sequence and optical map data.</title>
        <authorList>
            <person name="Kawahara Y."/>
            <person name="de la Bastide M."/>
            <person name="Hamilton J.P."/>
            <person name="Kanamori H."/>
            <person name="McCombie W.R."/>
            <person name="Ouyang S."/>
            <person name="Schwartz D.C."/>
            <person name="Tanaka T."/>
            <person name="Wu J."/>
            <person name="Zhou S."/>
            <person name="Childs K.L."/>
            <person name="Davidson R.M."/>
            <person name="Lin H."/>
            <person name="Quesada-Ocampo L."/>
            <person name="Vaillancourt B."/>
            <person name="Sakai H."/>
            <person name="Lee S.S."/>
            <person name="Kim J."/>
            <person name="Numa H."/>
            <person name="Itoh T."/>
            <person name="Buell C.R."/>
            <person name="Matsumoto T."/>
        </authorList>
    </citation>
    <scope>GENOME REANNOTATION</scope>
    <source>
        <strain>cv. Nipponbare</strain>
    </source>
</reference>
<reference key="4">
    <citation type="journal article" date="2005" name="PLoS Biol.">
        <title>The genomes of Oryza sativa: a history of duplications.</title>
        <authorList>
            <person name="Yu J."/>
            <person name="Wang J."/>
            <person name="Lin W."/>
            <person name="Li S."/>
            <person name="Li H."/>
            <person name="Zhou J."/>
            <person name="Ni P."/>
            <person name="Dong W."/>
            <person name="Hu S."/>
            <person name="Zeng C."/>
            <person name="Zhang J."/>
            <person name="Zhang Y."/>
            <person name="Li R."/>
            <person name="Xu Z."/>
            <person name="Li S."/>
            <person name="Li X."/>
            <person name="Zheng H."/>
            <person name="Cong L."/>
            <person name="Lin L."/>
            <person name="Yin J."/>
            <person name="Geng J."/>
            <person name="Li G."/>
            <person name="Shi J."/>
            <person name="Liu J."/>
            <person name="Lv H."/>
            <person name="Li J."/>
            <person name="Wang J."/>
            <person name="Deng Y."/>
            <person name="Ran L."/>
            <person name="Shi X."/>
            <person name="Wang X."/>
            <person name="Wu Q."/>
            <person name="Li C."/>
            <person name="Ren X."/>
            <person name="Wang J."/>
            <person name="Wang X."/>
            <person name="Li D."/>
            <person name="Liu D."/>
            <person name="Zhang X."/>
            <person name="Ji Z."/>
            <person name="Zhao W."/>
            <person name="Sun Y."/>
            <person name="Zhang Z."/>
            <person name="Bao J."/>
            <person name="Han Y."/>
            <person name="Dong L."/>
            <person name="Ji J."/>
            <person name="Chen P."/>
            <person name="Wu S."/>
            <person name="Liu J."/>
            <person name="Xiao Y."/>
            <person name="Bu D."/>
            <person name="Tan J."/>
            <person name="Yang L."/>
            <person name="Ye C."/>
            <person name="Zhang J."/>
            <person name="Xu J."/>
            <person name="Zhou Y."/>
            <person name="Yu Y."/>
            <person name="Zhang B."/>
            <person name="Zhuang S."/>
            <person name="Wei H."/>
            <person name="Liu B."/>
            <person name="Lei M."/>
            <person name="Yu H."/>
            <person name="Li Y."/>
            <person name="Xu H."/>
            <person name="Wei S."/>
            <person name="He X."/>
            <person name="Fang L."/>
            <person name="Zhang Z."/>
            <person name="Zhang Y."/>
            <person name="Huang X."/>
            <person name="Su Z."/>
            <person name="Tong W."/>
            <person name="Li J."/>
            <person name="Tong Z."/>
            <person name="Li S."/>
            <person name="Ye J."/>
            <person name="Wang L."/>
            <person name="Fang L."/>
            <person name="Lei T."/>
            <person name="Chen C.-S."/>
            <person name="Chen H.-C."/>
            <person name="Xu Z."/>
            <person name="Li H."/>
            <person name="Huang H."/>
            <person name="Zhang F."/>
            <person name="Xu H."/>
            <person name="Li N."/>
            <person name="Zhao C."/>
            <person name="Li S."/>
            <person name="Dong L."/>
            <person name="Huang Y."/>
            <person name="Li L."/>
            <person name="Xi Y."/>
            <person name="Qi Q."/>
            <person name="Li W."/>
            <person name="Zhang B."/>
            <person name="Hu W."/>
            <person name="Zhang Y."/>
            <person name="Tian X."/>
            <person name="Jiao Y."/>
            <person name="Liang X."/>
            <person name="Jin J."/>
            <person name="Gao L."/>
            <person name="Zheng W."/>
            <person name="Hao B."/>
            <person name="Liu S.-M."/>
            <person name="Wang W."/>
            <person name="Yuan L."/>
            <person name="Cao M."/>
            <person name="McDermott J."/>
            <person name="Samudrala R."/>
            <person name="Wang J."/>
            <person name="Wong G.K.-S."/>
            <person name="Yang H."/>
        </authorList>
    </citation>
    <scope>NUCLEOTIDE SEQUENCE [LARGE SCALE GENOMIC DNA]</scope>
    <source>
        <strain>cv. Nipponbare</strain>
    </source>
</reference>
<reference key="5">
    <citation type="journal article" date="2003" name="Science">
        <title>Collection, mapping, and annotation of over 28,000 cDNA clones from japonica rice.</title>
        <authorList>
            <consortium name="The rice full-length cDNA consortium"/>
        </authorList>
    </citation>
    <scope>NUCLEOTIDE SEQUENCE [LARGE SCALE MRNA]</scope>
    <source>
        <strain>cv. Nipponbare</strain>
    </source>
</reference>
<reference key="6">
    <citation type="journal article" date="2012" name="J. Biochem.">
        <title>The OsGEN-L protein from Oryza sativa possesses Holliday junction resolvase activity as well as 5'-flap endonuclease activity.</title>
        <authorList>
            <person name="Yang Y."/>
            <person name="Ishino S."/>
            <person name="Yamagami T."/>
            <person name="Kumamaru T."/>
            <person name="Satoh H."/>
            <person name="Ishino Y."/>
        </authorList>
    </citation>
    <scope>FUNCTION</scope>
    <scope>SUBUNIT</scope>
    <scope>INTERACTION WITH PCNA</scope>
</reference>
<sequence length="629" mass="70757">MGVGGSFWDLLKPYARHEGAGYLRGRRVAVDLSFWVVSHSAAIRARSPHARLPHLRTLFFRTLSLFSKMGAFPVFVVDGQPSPLKSQVRAARFFRGSGMDLAALPSTEAEASADALVQPRNAKFTRYVEDCVELLEYLGMPVLRAKGEGEALCAQLNNQGHVDACITSDSDAFLFGAKTVIKVLRSNCKEPFECYNMADIESGLGLKRKQMVAMALLVGSDHDLHGVPGFGPETALRFVQLFDEDNVLAKLYEIGKGVYPFIGVSAPNIDDLPSPSTKSLPRARSPHCSHCGHPGNKKNHIKDGCNFCLVDSLENCVEKPAGFICECPSCDKARDLKVQRRNENWQIKVCKRIAAETNFPNEEIINLYLNDDNLDNENGVPLLTWNKPDMEILVDFLSFKQNWEPAYIRQRMLPMLSTIYLREMASSQSKSFLLYDQYKFHSIQRIKIRYGHPYYLVKWKRVTRSMISNDPPSKQTELEGKNDKVEVLDGDDEVVDEEEEEPTMISETTELLDEPDVPQVLDDDKDCFLLTDEDIELVNAAFPDEAQRFQEEQRLKEAKSIARKSKLNVAGFETPKGPRPSGVQLSIKEFYRSKKGLSGDSGKDGSRKSSDVDLSKNLPKSVRRRLLFD</sequence>
<dbReference type="EC" id="3.1.-.-"/>
<dbReference type="EMBL" id="AB158320">
    <property type="protein sequence ID" value="BAD93194.1"/>
    <property type="molecule type" value="mRNA"/>
</dbReference>
<dbReference type="EMBL" id="AB194139">
    <property type="protein sequence ID" value="BAD93331.1"/>
    <property type="molecule type" value="Genomic_DNA"/>
</dbReference>
<dbReference type="EMBL" id="AP006859">
    <property type="protein sequence ID" value="BAD46702.1"/>
    <property type="molecule type" value="Genomic_DNA"/>
</dbReference>
<dbReference type="EMBL" id="AP014965">
    <property type="protein sequence ID" value="BAT09023.1"/>
    <property type="molecule type" value="Genomic_DNA"/>
</dbReference>
<dbReference type="EMBL" id="CM000142">
    <property type="protein sequence ID" value="EAZ33172.1"/>
    <property type="molecule type" value="Genomic_DNA"/>
</dbReference>
<dbReference type="EMBL" id="CM000142">
    <property type="protein sequence ID" value="EEE62627.1"/>
    <property type="molecule type" value="Genomic_DNA"/>
</dbReference>
<dbReference type="EMBL" id="AK063534">
    <property type="protein sequence ID" value="BAG88755.1"/>
    <property type="molecule type" value="mRNA"/>
</dbReference>
<dbReference type="RefSeq" id="XP_015610616.1">
    <property type="nucleotide sequence ID" value="XM_015755130.1"/>
</dbReference>
<dbReference type="SMR" id="Q64MA3"/>
<dbReference type="FunCoup" id="Q64MA3">
    <property type="interactions" value="11"/>
</dbReference>
<dbReference type="STRING" id="39947.Q64MA3"/>
<dbReference type="PaxDb" id="39947-Q64MA3"/>
<dbReference type="EnsemblPlants" id="Os09t0521900-01">
    <property type="protein sequence ID" value="Os09t0521900-01"/>
    <property type="gene ID" value="Os09g0521900"/>
</dbReference>
<dbReference type="Gramene" id="Os09t0521900-01">
    <property type="protein sequence ID" value="Os09t0521900-01"/>
    <property type="gene ID" value="Os09g0521900"/>
</dbReference>
<dbReference type="eggNOG" id="KOG2519">
    <property type="taxonomic scope" value="Eukaryota"/>
</dbReference>
<dbReference type="HOGENOM" id="CLU_013777_1_0_1"/>
<dbReference type="InParanoid" id="Q64MA3"/>
<dbReference type="OMA" id="RNLYFRT"/>
<dbReference type="OrthoDB" id="2959108at2759"/>
<dbReference type="Proteomes" id="UP000000763">
    <property type="component" value="Chromosome 9"/>
</dbReference>
<dbReference type="Proteomes" id="UP000007752">
    <property type="component" value="Chromosome 5"/>
</dbReference>
<dbReference type="Proteomes" id="UP000059680">
    <property type="component" value="Chromosome 9"/>
</dbReference>
<dbReference type="GO" id="GO:0005634">
    <property type="term" value="C:nucleus"/>
    <property type="evidence" value="ECO:0000314"/>
    <property type="project" value="Gramene"/>
</dbReference>
<dbReference type="GO" id="GO:0017108">
    <property type="term" value="F:5'-flap endonuclease activity"/>
    <property type="evidence" value="ECO:0000318"/>
    <property type="project" value="GO_Central"/>
</dbReference>
<dbReference type="GO" id="GO:0003690">
    <property type="term" value="F:double-stranded DNA binding"/>
    <property type="evidence" value="ECO:0000314"/>
    <property type="project" value="Gramene"/>
</dbReference>
<dbReference type="GO" id="GO:0048256">
    <property type="term" value="F:flap endonuclease activity"/>
    <property type="evidence" value="ECO:0000314"/>
    <property type="project" value="Gramene"/>
</dbReference>
<dbReference type="GO" id="GO:0046872">
    <property type="term" value="F:metal ion binding"/>
    <property type="evidence" value="ECO:0007669"/>
    <property type="project" value="UniProtKB-KW"/>
</dbReference>
<dbReference type="GO" id="GO:0003697">
    <property type="term" value="F:single-stranded DNA binding"/>
    <property type="evidence" value="ECO:0000314"/>
    <property type="project" value="Gramene"/>
</dbReference>
<dbReference type="GO" id="GO:0006281">
    <property type="term" value="P:DNA repair"/>
    <property type="evidence" value="ECO:0007669"/>
    <property type="project" value="UniProtKB-KW"/>
</dbReference>
<dbReference type="GO" id="GO:0009555">
    <property type="term" value="P:pollen development"/>
    <property type="evidence" value="ECO:0000315"/>
    <property type="project" value="Gramene"/>
</dbReference>
<dbReference type="CDD" id="cd09869">
    <property type="entry name" value="PIN_GEN1"/>
    <property type="match status" value="1"/>
</dbReference>
<dbReference type="FunFam" id="1.10.150.20:FF:000030">
    <property type="entry name" value="Flap endonuclease GEN-like 1"/>
    <property type="match status" value="1"/>
</dbReference>
<dbReference type="FunFam" id="3.40.50.1010:FF:000032">
    <property type="entry name" value="Flap endonuclease GEN-like 1"/>
    <property type="match status" value="1"/>
</dbReference>
<dbReference type="Gene3D" id="1.10.150.20">
    <property type="entry name" value="5' to 3' exonuclease, C-terminal subdomain"/>
    <property type="match status" value="1"/>
</dbReference>
<dbReference type="Gene3D" id="3.40.50.1010">
    <property type="entry name" value="5'-nuclease"/>
    <property type="match status" value="1"/>
</dbReference>
<dbReference type="InterPro" id="IPR036279">
    <property type="entry name" value="5-3_exonuclease_C_sf"/>
</dbReference>
<dbReference type="InterPro" id="IPR029060">
    <property type="entry name" value="PIN-like_dom_sf"/>
</dbReference>
<dbReference type="InterPro" id="IPR006086">
    <property type="entry name" value="XPG-I_dom"/>
</dbReference>
<dbReference type="InterPro" id="IPR006084">
    <property type="entry name" value="XPG/Rad2"/>
</dbReference>
<dbReference type="InterPro" id="IPR006085">
    <property type="entry name" value="XPG_DNA_repair_N"/>
</dbReference>
<dbReference type="PANTHER" id="PTHR11081:SF59">
    <property type="entry name" value="FI23547P1"/>
    <property type="match status" value="1"/>
</dbReference>
<dbReference type="PANTHER" id="PTHR11081">
    <property type="entry name" value="FLAP ENDONUCLEASE FAMILY MEMBER"/>
    <property type="match status" value="1"/>
</dbReference>
<dbReference type="Pfam" id="PF00867">
    <property type="entry name" value="XPG_I"/>
    <property type="match status" value="1"/>
</dbReference>
<dbReference type="Pfam" id="PF00752">
    <property type="entry name" value="XPG_N"/>
    <property type="match status" value="1"/>
</dbReference>
<dbReference type="PRINTS" id="PR00853">
    <property type="entry name" value="XPGRADSUPER"/>
</dbReference>
<dbReference type="SMART" id="SM00484">
    <property type="entry name" value="XPGI"/>
    <property type="match status" value="1"/>
</dbReference>
<dbReference type="SMART" id="SM00485">
    <property type="entry name" value="XPGN"/>
    <property type="match status" value="1"/>
</dbReference>
<dbReference type="SUPFAM" id="SSF47807">
    <property type="entry name" value="5' to 3' exonuclease, C-terminal subdomain"/>
    <property type="match status" value="1"/>
</dbReference>
<dbReference type="SUPFAM" id="SSF88723">
    <property type="entry name" value="PIN domain-like"/>
    <property type="match status" value="1"/>
</dbReference>